<proteinExistence type="inferred from homology"/>
<organism>
    <name type="scientific">Clostridium perfringens (strain 13 / Type A)</name>
    <dbReference type="NCBI Taxonomy" id="195102"/>
    <lineage>
        <taxon>Bacteria</taxon>
        <taxon>Bacillati</taxon>
        <taxon>Bacillota</taxon>
        <taxon>Clostridia</taxon>
        <taxon>Eubacteriales</taxon>
        <taxon>Clostridiaceae</taxon>
        <taxon>Clostridium</taxon>
    </lineage>
</organism>
<keyword id="KW-0066">ATP synthesis</keyword>
<keyword id="KW-0067">ATP-binding</keyword>
<keyword id="KW-1003">Cell membrane</keyword>
<keyword id="KW-0139">CF(1)</keyword>
<keyword id="KW-0375">Hydrogen ion transport</keyword>
<keyword id="KW-0406">Ion transport</keyword>
<keyword id="KW-0472">Membrane</keyword>
<keyword id="KW-0547">Nucleotide-binding</keyword>
<keyword id="KW-1185">Reference proteome</keyword>
<keyword id="KW-1278">Translocase</keyword>
<keyword id="KW-0813">Transport</keyword>
<protein>
    <recommendedName>
        <fullName evidence="1">ATP synthase subunit alpha</fullName>
        <ecNumber evidence="1">7.1.2.2</ecNumber>
    </recommendedName>
    <alternativeName>
        <fullName evidence="1">ATP synthase F1 sector subunit alpha</fullName>
    </alternativeName>
    <alternativeName>
        <fullName evidence="1">F-ATPase subunit alpha</fullName>
    </alternativeName>
</protein>
<feature type="chain" id="PRO_0000144324" description="ATP synthase subunit alpha">
    <location>
        <begin position="1"/>
        <end position="502"/>
    </location>
</feature>
<feature type="binding site" evidence="1">
    <location>
        <begin position="169"/>
        <end position="176"/>
    </location>
    <ligand>
        <name>ATP</name>
        <dbReference type="ChEBI" id="CHEBI:30616"/>
    </ligand>
</feature>
<feature type="site" description="Required for activity">
    <location>
        <position position="362"/>
    </location>
</feature>
<name>ATPA_CLOPE</name>
<comment type="function">
    <text evidence="1">Produces ATP from ADP in the presence of a proton gradient across the membrane. The alpha chain is a regulatory subunit.</text>
</comment>
<comment type="catalytic activity">
    <reaction evidence="1">
        <text>ATP + H2O + 4 H(+)(in) = ADP + phosphate + 5 H(+)(out)</text>
        <dbReference type="Rhea" id="RHEA:57720"/>
        <dbReference type="ChEBI" id="CHEBI:15377"/>
        <dbReference type="ChEBI" id="CHEBI:15378"/>
        <dbReference type="ChEBI" id="CHEBI:30616"/>
        <dbReference type="ChEBI" id="CHEBI:43474"/>
        <dbReference type="ChEBI" id="CHEBI:456216"/>
        <dbReference type="EC" id="7.1.2.2"/>
    </reaction>
</comment>
<comment type="subunit">
    <text evidence="1">F-type ATPases have 2 components, CF(1) - the catalytic core - and CF(0) - the membrane proton channel. CF(1) has five subunits: alpha(3), beta(3), gamma(1), delta(1), epsilon(1). CF(0) has three main subunits: a(1), b(2) and c(9-12). The alpha and beta chains form an alternating ring which encloses part of the gamma chain. CF(1) is attached to CF(0) by a central stalk formed by the gamma and epsilon chains, while a peripheral stalk is formed by the delta and b chains.</text>
</comment>
<comment type="subcellular location">
    <subcellularLocation>
        <location evidence="1">Cell membrane</location>
        <topology evidence="1">Peripheral membrane protein</topology>
    </subcellularLocation>
</comment>
<comment type="similarity">
    <text evidence="1">Belongs to the ATPase alpha/beta chains family.</text>
</comment>
<reference key="1">
    <citation type="journal article" date="2002" name="Proc. Natl. Acad. Sci. U.S.A.">
        <title>Complete genome sequence of Clostridium perfringens, an anaerobic flesh-eater.</title>
        <authorList>
            <person name="Shimizu T."/>
            <person name="Ohtani K."/>
            <person name="Hirakawa H."/>
            <person name="Ohshima K."/>
            <person name="Yamashita A."/>
            <person name="Shiba T."/>
            <person name="Ogasawara N."/>
            <person name="Hattori M."/>
            <person name="Kuhara S."/>
            <person name="Hayashi H."/>
        </authorList>
    </citation>
    <scope>NUCLEOTIDE SEQUENCE [LARGE SCALE GENOMIC DNA]</scope>
    <source>
        <strain>13 / Type A</strain>
    </source>
</reference>
<sequence length="502" mass="55266">MHIKPEEITSIIKNEIKNYEKELETVDSGTIIQIGDGVARVYGLEECMEGELLEFPNQVFGMALNLEQDNVGCVLLGSEEGIKEGDIVKRTGKIVEVPVGEDLIGRVVNSLGQPIDGKGPIKNDGYRAIEVPAPGILERSSVNEPLQTGIKAIDSMIPIGRGQRELIIGDRQTGKTAIAIDTIINQKGKDVICIYVAIGQKQSTVANIVNTLTEEGAMDYSIVVTASASESAPLQYIAPYSGCTMGEYFMNKGKHVLIIYDDLSKHAVAYRTMSLLIRRPPGREAYPGDVFYIHSRLLERAAKLSKENGGGSLTALPIIETLAGDVTAYIPTNVISITDGQIFLETELFNAGQRPAVNPGISVSRVGGNAQIKAMKQVSGTLRLELAQYRELASFAQFGSDLDKDTQARLEKGKRLIEILKQDQYKPMAVEKQIMIIYAAVNNFLLDIKVSDIKRFEKEFLEYMDTHHREIGKAILDKKVLDDELKSALESAIVEFKKIFLM</sequence>
<gene>
    <name evidence="1" type="primary">atpA</name>
    <name type="ordered locus">CPE2189</name>
</gene>
<dbReference type="EC" id="7.1.2.2" evidence="1"/>
<dbReference type="EMBL" id="BA000016">
    <property type="protein sequence ID" value="BAB81895.1"/>
    <property type="molecule type" value="Genomic_DNA"/>
</dbReference>
<dbReference type="RefSeq" id="WP_003452357.1">
    <property type="nucleotide sequence ID" value="NC_003366.1"/>
</dbReference>
<dbReference type="SMR" id="Q8XID2"/>
<dbReference type="STRING" id="195102.gene:10491468"/>
<dbReference type="GeneID" id="93001268"/>
<dbReference type="KEGG" id="cpe:CPE2189"/>
<dbReference type="HOGENOM" id="CLU_010091_2_1_9"/>
<dbReference type="Proteomes" id="UP000000818">
    <property type="component" value="Chromosome"/>
</dbReference>
<dbReference type="GO" id="GO:0005886">
    <property type="term" value="C:plasma membrane"/>
    <property type="evidence" value="ECO:0007669"/>
    <property type="project" value="UniProtKB-SubCell"/>
</dbReference>
<dbReference type="GO" id="GO:0045259">
    <property type="term" value="C:proton-transporting ATP synthase complex"/>
    <property type="evidence" value="ECO:0007669"/>
    <property type="project" value="UniProtKB-KW"/>
</dbReference>
<dbReference type="GO" id="GO:0043531">
    <property type="term" value="F:ADP binding"/>
    <property type="evidence" value="ECO:0007669"/>
    <property type="project" value="TreeGrafter"/>
</dbReference>
<dbReference type="GO" id="GO:0005524">
    <property type="term" value="F:ATP binding"/>
    <property type="evidence" value="ECO:0007669"/>
    <property type="project" value="UniProtKB-UniRule"/>
</dbReference>
<dbReference type="GO" id="GO:0046933">
    <property type="term" value="F:proton-transporting ATP synthase activity, rotational mechanism"/>
    <property type="evidence" value="ECO:0007669"/>
    <property type="project" value="UniProtKB-UniRule"/>
</dbReference>
<dbReference type="CDD" id="cd18113">
    <property type="entry name" value="ATP-synt_F1_alpha_C"/>
    <property type="match status" value="1"/>
</dbReference>
<dbReference type="CDD" id="cd18116">
    <property type="entry name" value="ATP-synt_F1_alpha_N"/>
    <property type="match status" value="1"/>
</dbReference>
<dbReference type="CDD" id="cd01132">
    <property type="entry name" value="F1-ATPase_alpha_CD"/>
    <property type="match status" value="1"/>
</dbReference>
<dbReference type="FunFam" id="1.20.150.20:FF:000001">
    <property type="entry name" value="ATP synthase subunit alpha"/>
    <property type="match status" value="1"/>
</dbReference>
<dbReference type="FunFam" id="2.40.30.20:FF:000001">
    <property type="entry name" value="ATP synthase subunit alpha"/>
    <property type="match status" value="1"/>
</dbReference>
<dbReference type="FunFam" id="3.40.50.300:FF:000002">
    <property type="entry name" value="ATP synthase subunit alpha"/>
    <property type="match status" value="1"/>
</dbReference>
<dbReference type="Gene3D" id="2.40.30.20">
    <property type="match status" value="1"/>
</dbReference>
<dbReference type="Gene3D" id="1.20.150.20">
    <property type="entry name" value="ATP synthase alpha/beta chain, C-terminal domain"/>
    <property type="match status" value="1"/>
</dbReference>
<dbReference type="Gene3D" id="3.40.50.300">
    <property type="entry name" value="P-loop containing nucleotide triphosphate hydrolases"/>
    <property type="match status" value="1"/>
</dbReference>
<dbReference type="HAMAP" id="MF_01346">
    <property type="entry name" value="ATP_synth_alpha_bact"/>
    <property type="match status" value="1"/>
</dbReference>
<dbReference type="InterPro" id="IPR023366">
    <property type="entry name" value="ATP_synth_asu-like_sf"/>
</dbReference>
<dbReference type="InterPro" id="IPR000793">
    <property type="entry name" value="ATP_synth_asu_C"/>
</dbReference>
<dbReference type="InterPro" id="IPR038376">
    <property type="entry name" value="ATP_synth_asu_C_sf"/>
</dbReference>
<dbReference type="InterPro" id="IPR033732">
    <property type="entry name" value="ATP_synth_F1_a_nt-bd_dom"/>
</dbReference>
<dbReference type="InterPro" id="IPR005294">
    <property type="entry name" value="ATP_synth_F1_asu"/>
</dbReference>
<dbReference type="InterPro" id="IPR020003">
    <property type="entry name" value="ATPase_a/bsu_AS"/>
</dbReference>
<dbReference type="InterPro" id="IPR004100">
    <property type="entry name" value="ATPase_F1/V1/A1_a/bsu_N"/>
</dbReference>
<dbReference type="InterPro" id="IPR036121">
    <property type="entry name" value="ATPase_F1/V1/A1_a/bsu_N_sf"/>
</dbReference>
<dbReference type="InterPro" id="IPR000194">
    <property type="entry name" value="ATPase_F1/V1/A1_a/bsu_nucl-bd"/>
</dbReference>
<dbReference type="InterPro" id="IPR027417">
    <property type="entry name" value="P-loop_NTPase"/>
</dbReference>
<dbReference type="NCBIfam" id="TIGR00962">
    <property type="entry name" value="atpA"/>
    <property type="match status" value="1"/>
</dbReference>
<dbReference type="NCBIfam" id="NF009884">
    <property type="entry name" value="PRK13343.1"/>
    <property type="match status" value="1"/>
</dbReference>
<dbReference type="PANTHER" id="PTHR48082">
    <property type="entry name" value="ATP SYNTHASE SUBUNIT ALPHA, MITOCHONDRIAL"/>
    <property type="match status" value="1"/>
</dbReference>
<dbReference type="PANTHER" id="PTHR48082:SF2">
    <property type="entry name" value="ATP SYNTHASE SUBUNIT ALPHA, MITOCHONDRIAL"/>
    <property type="match status" value="1"/>
</dbReference>
<dbReference type="Pfam" id="PF00006">
    <property type="entry name" value="ATP-synt_ab"/>
    <property type="match status" value="1"/>
</dbReference>
<dbReference type="Pfam" id="PF00306">
    <property type="entry name" value="ATP-synt_ab_C"/>
    <property type="match status" value="1"/>
</dbReference>
<dbReference type="Pfam" id="PF02874">
    <property type="entry name" value="ATP-synt_ab_N"/>
    <property type="match status" value="1"/>
</dbReference>
<dbReference type="PIRSF" id="PIRSF039088">
    <property type="entry name" value="F_ATPase_subunit_alpha"/>
    <property type="match status" value="1"/>
</dbReference>
<dbReference type="SUPFAM" id="SSF47917">
    <property type="entry name" value="C-terminal domain of alpha and beta subunits of F1 ATP synthase"/>
    <property type="match status" value="1"/>
</dbReference>
<dbReference type="SUPFAM" id="SSF50615">
    <property type="entry name" value="N-terminal domain of alpha and beta subunits of F1 ATP synthase"/>
    <property type="match status" value="1"/>
</dbReference>
<dbReference type="SUPFAM" id="SSF52540">
    <property type="entry name" value="P-loop containing nucleoside triphosphate hydrolases"/>
    <property type="match status" value="1"/>
</dbReference>
<dbReference type="PROSITE" id="PS00152">
    <property type="entry name" value="ATPASE_ALPHA_BETA"/>
    <property type="match status" value="1"/>
</dbReference>
<evidence type="ECO:0000255" key="1">
    <source>
        <dbReference type="HAMAP-Rule" id="MF_01346"/>
    </source>
</evidence>
<accession>Q8XID2</accession>